<comment type="function">
    <text evidence="1 3">Vacuolar ATPase is responsible for acidifying a variety of intracellular compartments in eukaryotic cells. The B subunit is non-catalytic but combines with other subunits to form the catalytic complex. V-ATPase is responsible for energizing electrophoretic K(+)/2H(+) antiport by generating a transmembrane voltage of more than 200 mV (By similarity).</text>
</comment>
<comment type="subunit">
    <text evidence="1">V-ATPase is a heteromultimeric enzyme composed of a peripheral catalytic V1 complex (main components: subunits A, B, C, D, E, and F) attached to an integral membrane V0 proton pore complex (main component: the proteolipid protein).</text>
</comment>
<comment type="subcellular location">
    <subcellularLocation>
        <location>Cytoplasmic vesicle membrane</location>
        <topology>Peripheral membrane protein</topology>
        <orientation>Cytoplasmic side</orientation>
    </subcellularLocation>
    <subcellularLocation>
        <location>Endosome membrane</location>
        <topology>Peripheral membrane protein</topology>
        <orientation>Cytoplasmic side</orientation>
    </subcellularLocation>
    <subcellularLocation>
        <location>Contractile vacuole membrane</location>
        <topology>Peripheral membrane protein</topology>
        <orientation>Cytoplasmic side</orientation>
    </subcellularLocation>
    <text>Detected on macropinosomes and phagosomes, on contractile vacuoles, cytoplasmic cisternae and on the tubular extensions linking these vesicles.</text>
</comment>
<comment type="developmental stage">
    <text evidence="4">Highly expressed during vegetative growth. Down-regulated in starving cells and during development.</text>
</comment>
<comment type="induction">
    <text evidence="4">Down-regulated when cells are exposed to an acid environment. Up-regulated when cells are exposed to high pH.</text>
</comment>
<comment type="similarity">
    <text evidence="6">Belongs to the ATPase alpha/beta chains family.</text>
</comment>
<name>VATB_DICDI</name>
<accession>Q76NU1</accession>
<accession>Q23926</accession>
<accession>Q54ZN4</accession>
<feature type="initiator methionine" description="Removed" evidence="2 5">
    <location>
        <position position="1"/>
    </location>
</feature>
<feature type="chain" id="PRO_0000328285" description="V-type proton ATPase subunit B">
    <location>
        <begin position="2"/>
        <end position="493"/>
    </location>
</feature>
<feature type="sequence conflict" description="In Ref. 6; AAB04559." evidence="6" ref="6">
    <original>F</original>
    <variation>S</variation>
    <location>
        <position position="237"/>
    </location>
</feature>
<feature type="sequence conflict" description="In Ref. 6; AAB04559." evidence="6" ref="6">
    <original>G</original>
    <variation>R</variation>
    <location>
        <position position="299"/>
    </location>
</feature>
<feature type="sequence conflict" description="In Ref. 6; AAB04559." evidence="6" ref="6">
    <original>Y</original>
    <variation>N</variation>
    <location>
        <position position="312"/>
    </location>
</feature>
<feature type="sequence conflict" description="In Ref. 6; AAB04559." evidence="6" ref="6">
    <original>N</original>
    <variation>K</variation>
    <location>
        <position position="322"/>
    </location>
</feature>
<feature type="sequence conflict" description="In Ref. 6; AAB04559." evidence="6" ref="6">
    <original>L</original>
    <variation>W</variation>
    <location>
        <position position="331"/>
    </location>
</feature>
<feature type="sequence conflict" description="In Ref. 6; AAB04559." evidence="6" ref="6">
    <original>I</original>
    <variation>L</variation>
    <location>
        <position position="360"/>
    </location>
</feature>
<feature type="sequence conflict" description="In Ref. 6; AAB04559." evidence="6" ref="6">
    <original>L</original>
    <variation>F</variation>
    <location>
        <position position="375"/>
    </location>
</feature>
<feature type="sequence conflict" description="In Ref. 6; AAB04559." evidence="6" ref="6">
    <original>D</original>
    <variation>E</variation>
    <location>
        <position position="385"/>
    </location>
</feature>
<feature type="sequence conflict" description="In Ref. 6; AAB04559." evidence="6" ref="6">
    <original>R</original>
    <variation>K</variation>
    <location>
        <position position="462"/>
    </location>
</feature>
<dbReference type="EMBL" id="AAFI02000020">
    <property type="protein sequence ID" value="EAL68663.1"/>
    <property type="molecule type" value="Genomic_DNA"/>
</dbReference>
<dbReference type="EMBL" id="U63317">
    <property type="protein sequence ID" value="AAB04559.1"/>
    <property type="molecule type" value="mRNA"/>
</dbReference>
<dbReference type="RefSeq" id="XP_642608.1">
    <property type="nucleotide sequence ID" value="XM_637516.1"/>
</dbReference>
<dbReference type="SMR" id="Q76NU1"/>
<dbReference type="FunCoup" id="Q76NU1">
    <property type="interactions" value="267"/>
</dbReference>
<dbReference type="STRING" id="44689.Q76NU1"/>
<dbReference type="PaxDb" id="44689-DDB0185207"/>
<dbReference type="EnsemblProtists" id="EAL68663">
    <property type="protein sequence ID" value="EAL68663"/>
    <property type="gene ID" value="DDB_G0277401"/>
</dbReference>
<dbReference type="GeneID" id="8621025"/>
<dbReference type="KEGG" id="ddi:DDB_G0277401"/>
<dbReference type="dictyBase" id="DDB_G0277401">
    <property type="gene designation" value="vatB"/>
</dbReference>
<dbReference type="VEuPathDB" id="AmoebaDB:DDB_G0277401"/>
<dbReference type="eggNOG" id="KOG1351">
    <property type="taxonomic scope" value="Eukaryota"/>
</dbReference>
<dbReference type="HOGENOM" id="CLU_022916_3_0_1"/>
<dbReference type="InParanoid" id="Q76NU1"/>
<dbReference type="OMA" id="EGFKIKP"/>
<dbReference type="PhylomeDB" id="Q76NU1"/>
<dbReference type="Reactome" id="R-DDI-1222556">
    <property type="pathway name" value="ROS and RNS production in phagocytes"/>
</dbReference>
<dbReference type="Reactome" id="R-DDI-77387">
    <property type="pathway name" value="Insulin receptor recycling"/>
</dbReference>
<dbReference type="Reactome" id="R-DDI-917977">
    <property type="pathway name" value="Transferrin endocytosis and recycling"/>
</dbReference>
<dbReference type="Reactome" id="R-DDI-9639288">
    <property type="pathway name" value="Amino acids regulate mTORC1"/>
</dbReference>
<dbReference type="PRO" id="PR:Q76NU1"/>
<dbReference type="Proteomes" id="UP000002195">
    <property type="component" value="Chromosome 2"/>
</dbReference>
<dbReference type="GO" id="GO:0031164">
    <property type="term" value="C:contractile vacuolar membrane"/>
    <property type="evidence" value="ECO:0000314"/>
    <property type="project" value="dictyBase"/>
</dbReference>
<dbReference type="GO" id="GO:0030139">
    <property type="term" value="C:endocytic vesicle"/>
    <property type="evidence" value="ECO:0000314"/>
    <property type="project" value="dictyBase"/>
</dbReference>
<dbReference type="GO" id="GO:0010008">
    <property type="term" value="C:endosome membrane"/>
    <property type="evidence" value="ECO:0007669"/>
    <property type="project" value="UniProtKB-SubCell"/>
</dbReference>
<dbReference type="GO" id="GO:0140220">
    <property type="term" value="C:pathogen-containing vacuole"/>
    <property type="evidence" value="ECO:0007005"/>
    <property type="project" value="dictyBase"/>
</dbReference>
<dbReference type="GO" id="GO:0045335">
    <property type="term" value="C:phagocytic vesicle"/>
    <property type="evidence" value="ECO:0000314"/>
    <property type="project" value="dictyBase"/>
</dbReference>
<dbReference type="GO" id="GO:0033180">
    <property type="term" value="C:proton-transporting V-type ATPase, V1 domain"/>
    <property type="evidence" value="ECO:0007669"/>
    <property type="project" value="InterPro"/>
</dbReference>
<dbReference type="GO" id="GO:0005524">
    <property type="term" value="F:ATP binding"/>
    <property type="evidence" value="ECO:0007669"/>
    <property type="project" value="InterPro"/>
</dbReference>
<dbReference type="GO" id="GO:0046961">
    <property type="term" value="F:proton-transporting ATPase activity, rotational mechanism"/>
    <property type="evidence" value="ECO:0000318"/>
    <property type="project" value="GO_Central"/>
</dbReference>
<dbReference type="GO" id="GO:0046034">
    <property type="term" value="P:ATP metabolic process"/>
    <property type="evidence" value="ECO:0007669"/>
    <property type="project" value="InterPro"/>
</dbReference>
<dbReference type="GO" id="GO:0009617">
    <property type="term" value="P:response to bacterium"/>
    <property type="evidence" value="ECO:0007007"/>
    <property type="project" value="dictyBase"/>
</dbReference>
<dbReference type="GO" id="GO:0036176">
    <property type="term" value="P:response to neutral pH"/>
    <property type="evidence" value="ECO:0000315"/>
    <property type="project" value="dictyBase"/>
</dbReference>
<dbReference type="GO" id="GO:0007035">
    <property type="term" value="P:vacuolar acidification"/>
    <property type="evidence" value="ECO:0000318"/>
    <property type="project" value="GO_Central"/>
</dbReference>
<dbReference type="CDD" id="cd18112">
    <property type="entry name" value="ATP-synt_V_A-type_beta_C"/>
    <property type="match status" value="1"/>
</dbReference>
<dbReference type="CDD" id="cd18118">
    <property type="entry name" value="ATP-synt_V_A-type_beta_N"/>
    <property type="match status" value="1"/>
</dbReference>
<dbReference type="CDD" id="cd01135">
    <property type="entry name" value="V_A-ATPase_B"/>
    <property type="match status" value="1"/>
</dbReference>
<dbReference type="FunFam" id="3.40.50.12240:FF:000001">
    <property type="entry name" value="V-type proton ATPase subunit B, brain"/>
    <property type="match status" value="1"/>
</dbReference>
<dbReference type="Gene3D" id="3.40.50.12240">
    <property type="match status" value="1"/>
</dbReference>
<dbReference type="HAMAP" id="MF_00310">
    <property type="entry name" value="ATP_synth_B_arch"/>
    <property type="match status" value="1"/>
</dbReference>
<dbReference type="InterPro" id="IPR055190">
    <property type="entry name" value="ATP-synt_VA_C"/>
</dbReference>
<dbReference type="InterPro" id="IPR020003">
    <property type="entry name" value="ATPase_a/bsu_AS"/>
</dbReference>
<dbReference type="InterPro" id="IPR004100">
    <property type="entry name" value="ATPase_F1/V1/A1_a/bsu_N"/>
</dbReference>
<dbReference type="InterPro" id="IPR000194">
    <property type="entry name" value="ATPase_F1/V1/A1_a/bsu_nucl-bd"/>
</dbReference>
<dbReference type="InterPro" id="IPR005723">
    <property type="entry name" value="ATPase_V1-cplx_bsu"/>
</dbReference>
<dbReference type="InterPro" id="IPR027417">
    <property type="entry name" value="P-loop_NTPase"/>
</dbReference>
<dbReference type="InterPro" id="IPR022879">
    <property type="entry name" value="V-ATPase_su_B/beta"/>
</dbReference>
<dbReference type="NCBIfam" id="NF003235">
    <property type="entry name" value="PRK04196.1"/>
    <property type="match status" value="1"/>
</dbReference>
<dbReference type="NCBIfam" id="TIGR01040">
    <property type="entry name" value="V-ATPase_V1_B"/>
    <property type="match status" value="1"/>
</dbReference>
<dbReference type="PANTHER" id="PTHR43389">
    <property type="entry name" value="V-TYPE PROTON ATPASE SUBUNIT B"/>
    <property type="match status" value="1"/>
</dbReference>
<dbReference type="PANTHER" id="PTHR43389:SF4">
    <property type="entry name" value="V-TYPE PROTON ATPASE SUBUNIT B"/>
    <property type="match status" value="1"/>
</dbReference>
<dbReference type="Pfam" id="PF00006">
    <property type="entry name" value="ATP-synt_ab"/>
    <property type="match status" value="1"/>
</dbReference>
<dbReference type="Pfam" id="PF02874">
    <property type="entry name" value="ATP-synt_ab_N"/>
    <property type="match status" value="1"/>
</dbReference>
<dbReference type="Pfam" id="PF22919">
    <property type="entry name" value="ATP-synt_VA_C"/>
    <property type="match status" value="1"/>
</dbReference>
<dbReference type="PIRSF" id="PIRSF039114">
    <property type="entry name" value="V-ATPsynth_beta/V-ATPase_B"/>
    <property type="match status" value="1"/>
</dbReference>
<dbReference type="SUPFAM" id="SSF52540">
    <property type="entry name" value="P-loop containing nucleoside triphosphate hydrolases"/>
    <property type="match status" value="1"/>
</dbReference>
<dbReference type="PROSITE" id="PS00152">
    <property type="entry name" value="ATPASE_ALPHA_BETA"/>
    <property type="match status" value="1"/>
</dbReference>
<evidence type="ECO:0000250" key="1"/>
<evidence type="ECO:0000269" key="2">
    <source>
    </source>
</evidence>
<evidence type="ECO:0000269" key="3">
    <source>
    </source>
</evidence>
<evidence type="ECO:0000269" key="4">
    <source>
    </source>
</evidence>
<evidence type="ECO:0000269" key="5">
    <source ref="5"/>
</evidence>
<evidence type="ECO:0000305" key="6"/>
<reference key="1">
    <citation type="journal article" date="1997" name="FEBS Lett.">
        <title>Cloning and transcriptional regulation of the gene encoding the vacuolar/H+ ATPase B subunit of Dictyostelium discoideum.</title>
        <authorList>
            <person name="Bracco E."/>
            <person name="Peracino B."/>
            <person name="Noegel A.A."/>
            <person name="Bozzaro S."/>
        </authorList>
    </citation>
    <scope>NUCLEOTIDE SEQUENCE [GENOMIC DNA]</scope>
    <scope>INDUCTION</scope>
    <scope>DEVELOPMENTAL STAGE</scope>
</reference>
<reference key="2">
    <citation type="journal article" date="2002" name="Nature">
        <title>Sequence and analysis of chromosome 2 of Dictyostelium discoideum.</title>
        <authorList>
            <person name="Gloeckner G."/>
            <person name="Eichinger L."/>
            <person name="Szafranski K."/>
            <person name="Pachebat J.A."/>
            <person name="Bankier A.T."/>
            <person name="Dear P.H."/>
            <person name="Lehmann R."/>
            <person name="Baumgart C."/>
            <person name="Parra G."/>
            <person name="Abril J.F."/>
            <person name="Guigo R."/>
            <person name="Kumpf K."/>
            <person name="Tunggal B."/>
            <person name="Cox E.C."/>
            <person name="Quail M.A."/>
            <person name="Platzer M."/>
            <person name="Rosenthal A."/>
            <person name="Noegel A.A."/>
        </authorList>
    </citation>
    <scope>NUCLEOTIDE SEQUENCE [LARGE SCALE GENOMIC DNA]</scope>
    <source>
        <strain>AX4</strain>
    </source>
</reference>
<reference key="3">
    <citation type="journal article" date="2005" name="Nature">
        <title>The genome of the social amoeba Dictyostelium discoideum.</title>
        <authorList>
            <person name="Eichinger L."/>
            <person name="Pachebat J.A."/>
            <person name="Gloeckner G."/>
            <person name="Rajandream M.A."/>
            <person name="Sucgang R."/>
            <person name="Berriman M."/>
            <person name="Song J."/>
            <person name="Olsen R."/>
            <person name="Szafranski K."/>
            <person name="Xu Q."/>
            <person name="Tunggal B."/>
            <person name="Kummerfeld S."/>
            <person name="Madera M."/>
            <person name="Konfortov B.A."/>
            <person name="Rivero F."/>
            <person name="Bankier A.T."/>
            <person name="Lehmann R."/>
            <person name="Hamlin N."/>
            <person name="Davies R."/>
            <person name="Gaudet P."/>
            <person name="Fey P."/>
            <person name="Pilcher K."/>
            <person name="Chen G."/>
            <person name="Saunders D."/>
            <person name="Sodergren E.J."/>
            <person name="Davis P."/>
            <person name="Kerhornou A."/>
            <person name="Nie X."/>
            <person name="Hall N."/>
            <person name="Anjard C."/>
            <person name="Hemphill L."/>
            <person name="Bason N."/>
            <person name="Farbrother P."/>
            <person name="Desany B."/>
            <person name="Just E."/>
            <person name="Morio T."/>
            <person name="Rost R."/>
            <person name="Churcher C.M."/>
            <person name="Cooper J."/>
            <person name="Haydock S."/>
            <person name="van Driessche N."/>
            <person name="Cronin A."/>
            <person name="Goodhead I."/>
            <person name="Muzny D.M."/>
            <person name="Mourier T."/>
            <person name="Pain A."/>
            <person name="Lu M."/>
            <person name="Harper D."/>
            <person name="Lindsay R."/>
            <person name="Hauser H."/>
            <person name="James K.D."/>
            <person name="Quiles M."/>
            <person name="Madan Babu M."/>
            <person name="Saito T."/>
            <person name="Buchrieser C."/>
            <person name="Wardroper A."/>
            <person name="Felder M."/>
            <person name="Thangavelu M."/>
            <person name="Johnson D."/>
            <person name="Knights A."/>
            <person name="Loulseged H."/>
            <person name="Mungall K.L."/>
            <person name="Oliver K."/>
            <person name="Price C."/>
            <person name="Quail M.A."/>
            <person name="Urushihara H."/>
            <person name="Hernandez J."/>
            <person name="Rabbinowitsch E."/>
            <person name="Steffen D."/>
            <person name="Sanders M."/>
            <person name="Ma J."/>
            <person name="Kohara Y."/>
            <person name="Sharp S."/>
            <person name="Simmonds M.N."/>
            <person name="Spiegler S."/>
            <person name="Tivey A."/>
            <person name="Sugano S."/>
            <person name="White B."/>
            <person name="Walker D."/>
            <person name="Woodward J.R."/>
            <person name="Winckler T."/>
            <person name="Tanaka Y."/>
            <person name="Shaulsky G."/>
            <person name="Schleicher M."/>
            <person name="Weinstock G.M."/>
            <person name="Rosenthal A."/>
            <person name="Cox E.C."/>
            <person name="Chisholm R.L."/>
            <person name="Gibbs R.A."/>
            <person name="Loomis W.F."/>
            <person name="Platzer M."/>
            <person name="Kay R.R."/>
            <person name="Williams J.G."/>
            <person name="Dear P.H."/>
            <person name="Noegel A.A."/>
            <person name="Barrell B.G."/>
            <person name="Kuspa A."/>
        </authorList>
    </citation>
    <scope>NUCLEOTIDE SEQUENCE [LARGE SCALE GENOMIC DNA]</scope>
    <source>
        <strain>AX4</strain>
    </source>
</reference>
<reference key="4">
    <citation type="journal article" date="1995" name="J. Cell Sci.">
        <title>Identification of major proteins associated with Dictyostelium discoideum endocytic vesicles.</title>
        <authorList>
            <person name="Adessi C."/>
            <person name="Chapel A."/>
            <person name="Vincon M."/>
            <person name="Rabilloud T."/>
            <person name="Klein G."/>
            <person name="Satre M."/>
            <person name="Garin J."/>
        </authorList>
    </citation>
    <scope>PROTEIN SEQUENCE OF 2-19; 232-241; 292-307; 391-421 AND 433-445</scope>
    <scope>SUBCELLULAR LOCATION</scope>
</reference>
<reference key="5">
    <citation type="submission" date="2007-07" db="UniProtKB">
        <authorList>
            <person name="Bienvenut W.V."/>
            <person name="Patel H."/>
            <person name="Brunton V.G."/>
            <person name="Frame M.C."/>
        </authorList>
    </citation>
    <scope>PROTEIN SEQUENCE OF 2-13 AND 60-68</scope>
    <scope>CLEAVAGE OF INITIATOR METHIONINE</scope>
    <scope>IDENTIFICATION BY MASS SPECTROMETRY</scope>
</reference>
<reference key="6">
    <citation type="journal article" date="1996" name="Mol. Microbiol.">
        <title>Vacuolar H(+)-ATPase and weak base action in Dictyostelium.</title>
        <authorList>
            <person name="Davies L."/>
            <person name="Farrar N.A."/>
            <person name="Satre M."/>
            <person name="Dottin R.P."/>
            <person name="Gross J.D."/>
        </authorList>
    </citation>
    <scope>NUCLEOTIDE SEQUENCE [MRNA] OF 213-488</scope>
    <scope>FUNCTION</scope>
</reference>
<reference key="7">
    <citation type="journal article" date="1993" name="J. Cell Biol.">
        <title>Proton pumps populate the contractile vacuoles of Dictyostelium amoebae.</title>
        <authorList>
            <person name="Heuser J."/>
            <person name="Zhu Q."/>
            <person name="Clarke M."/>
        </authorList>
    </citation>
    <scope>SUBCELLULAR LOCATION</scope>
</reference>
<reference key="8">
    <citation type="journal article" date="2006" name="Traffic">
        <title>Function and mechanism of action of Dictyostelium Nramp1 (Slc11a1) in bacterial infection.</title>
        <authorList>
            <person name="Peracino B."/>
            <person name="Wagner C."/>
            <person name="Balest A."/>
            <person name="Balbo A."/>
            <person name="Pergolizzi B."/>
            <person name="Noegel A.A."/>
            <person name="Steinert M."/>
            <person name="Bozzaro S."/>
        </authorList>
    </citation>
    <scope>SUBCELLULAR LOCATION</scope>
</reference>
<reference key="9">
    <citation type="journal article" date="2006" name="Mol. Cell. Proteomics">
        <title>Proteomics fingerprinting of phagosome maturation and evidence for the role of a Galpha during uptake.</title>
        <authorList>
            <person name="Gotthardt D."/>
            <person name="Blancheteau V."/>
            <person name="Bosserhoff A."/>
            <person name="Ruppert T."/>
            <person name="Delorenzi M."/>
            <person name="Soldati T."/>
        </authorList>
    </citation>
    <scope>IDENTIFICATION BY MASS SPECTROMETRY [LARGE SCALE ANALYSIS]</scope>
    <source>
        <strain>AX2</strain>
    </source>
</reference>
<sequence length="493" mass="54876">MVGFEDHIAAITRNYQVNPRLDYRTVTAVNGPLVILDNIRGPKFSEIVTLTLGDGTQRKGQVLEIQGKRAVVQVFEGTIGIDAKHTRCEFSGDILKMPVSEDSLGRIFNGSGKPVDKGPNVLAEEYLDIQGQPINPSVRVYPQEMIQTGISAIDTMNSIARGQKIPIFSAAGLPHNEIAAQICRQAGLVKKSGKGVIDDHEDNFAIVFAAMGVNMETASFFKRDFEESGSMDRTALFLNLADHPTIERIITPRLALTTAEYLAYQCEKHVLVLLTDMSSYADALREVSAAREEVPGRRGYPGYMYTDLSTIYERAGRIQGRNGSITQIPILTMPNDDITHPIPDLTGYITEGQIFIDRQINNRQIYPPINVLPSLSRLMKSAIGDDMTRGDHSEVSNQMYANYAIGKDVQAMKAVVGEEALSSEDKLYLEFLERFESSFVGQNHYENRDIFNSLDLGWSLLRTFPSNLLKRITEKTIKQYYSRSSKGTVDSTN</sequence>
<proteinExistence type="evidence at protein level"/>
<organism>
    <name type="scientific">Dictyostelium discoideum</name>
    <name type="common">Social amoeba</name>
    <dbReference type="NCBI Taxonomy" id="44689"/>
    <lineage>
        <taxon>Eukaryota</taxon>
        <taxon>Amoebozoa</taxon>
        <taxon>Evosea</taxon>
        <taxon>Eumycetozoa</taxon>
        <taxon>Dictyostelia</taxon>
        <taxon>Dictyosteliales</taxon>
        <taxon>Dictyosteliaceae</taxon>
        <taxon>Dictyostelium</taxon>
    </lineage>
</organism>
<gene>
    <name type="primary">vatB</name>
    <name type="synonym">dvacB</name>
    <name type="ORF">DDB_G0277401</name>
</gene>
<protein>
    <recommendedName>
        <fullName>V-type proton ATPase subunit B</fullName>
        <shortName>V-ATPase subunit B</shortName>
    </recommendedName>
    <alternativeName>
        <fullName>Vacuolar proton pump subunit B</fullName>
    </alternativeName>
</protein>
<keyword id="KW-0968">Cytoplasmic vesicle</keyword>
<keyword id="KW-0903">Direct protein sequencing</keyword>
<keyword id="KW-0967">Endosome</keyword>
<keyword id="KW-0375">Hydrogen ion transport</keyword>
<keyword id="KW-0406">Ion transport</keyword>
<keyword id="KW-0472">Membrane</keyword>
<keyword id="KW-1185">Reference proteome</keyword>
<keyword id="KW-0813">Transport</keyword>
<keyword id="KW-0926">Vacuole</keyword>